<reference key="1">
    <citation type="journal article" date="2008" name="J. Bacteriol.">
        <title>Complete genome sequence of uropathogenic Proteus mirabilis, a master of both adherence and motility.</title>
        <authorList>
            <person name="Pearson M.M."/>
            <person name="Sebaihia M."/>
            <person name="Churcher C."/>
            <person name="Quail M.A."/>
            <person name="Seshasayee A.S."/>
            <person name="Luscombe N.M."/>
            <person name="Abdellah Z."/>
            <person name="Arrosmith C."/>
            <person name="Atkin B."/>
            <person name="Chillingworth T."/>
            <person name="Hauser H."/>
            <person name="Jagels K."/>
            <person name="Moule S."/>
            <person name="Mungall K."/>
            <person name="Norbertczak H."/>
            <person name="Rabbinowitsch E."/>
            <person name="Walker D."/>
            <person name="Whithead S."/>
            <person name="Thomson N.R."/>
            <person name="Rather P.N."/>
            <person name="Parkhill J."/>
            <person name="Mobley H.L.T."/>
        </authorList>
    </citation>
    <scope>NUCLEOTIDE SEQUENCE [LARGE SCALE GENOMIC DNA]</scope>
    <source>
        <strain>HI4320</strain>
    </source>
</reference>
<protein>
    <recommendedName>
        <fullName evidence="1">ATP synthase subunit c</fullName>
    </recommendedName>
    <alternativeName>
        <fullName evidence="1">ATP synthase F(0) sector subunit c</fullName>
    </alternativeName>
    <alternativeName>
        <fullName evidence="1">F-type ATPase subunit c</fullName>
        <shortName evidence="1">F-ATPase subunit c</shortName>
    </alternativeName>
    <alternativeName>
        <fullName evidence="1">Lipid-binding protein</fullName>
    </alternativeName>
</protein>
<accession>B4F0E2</accession>
<proteinExistence type="inferred from homology"/>
<feature type="chain" id="PRO_1000184434" description="ATP synthase subunit c">
    <location>
        <begin position="1"/>
        <end position="79"/>
    </location>
</feature>
<feature type="transmembrane region" description="Helical" evidence="1">
    <location>
        <begin position="11"/>
        <end position="31"/>
    </location>
</feature>
<feature type="transmembrane region" description="Helical" evidence="1">
    <location>
        <begin position="53"/>
        <end position="73"/>
    </location>
</feature>
<feature type="site" description="Reversibly protonated during proton transport" evidence="1">
    <location>
        <position position="61"/>
    </location>
</feature>
<sequence>MENLSMDLLYMAAAIMMGLAAIGAAIGIGILGGKFLEGAARQPDLIPLLRTQFFIVMGLVDAIPMIAVGLGLYVMFAVA</sequence>
<evidence type="ECO:0000255" key="1">
    <source>
        <dbReference type="HAMAP-Rule" id="MF_01396"/>
    </source>
</evidence>
<comment type="function">
    <text evidence="1">F(1)F(0) ATP synthase produces ATP from ADP in the presence of a proton or sodium gradient. F-type ATPases consist of two structural domains, F(1) containing the extramembraneous catalytic core and F(0) containing the membrane proton channel, linked together by a central stalk and a peripheral stalk. During catalysis, ATP synthesis in the catalytic domain of F(1) is coupled via a rotary mechanism of the central stalk subunits to proton translocation.</text>
</comment>
<comment type="function">
    <text evidence="1">Key component of the F(0) channel; it plays a direct role in translocation across the membrane. A homomeric c-ring of between 10-14 subunits forms the central stalk rotor element with the F(1) delta and epsilon subunits.</text>
</comment>
<comment type="subunit">
    <text evidence="1">F-type ATPases have 2 components, F(1) - the catalytic core - and F(0) - the membrane proton channel. F(1) has five subunits: alpha(3), beta(3), gamma(1), delta(1), epsilon(1). F(0) has three main subunits: a(1), b(2) and c(10-14). The alpha and beta chains form an alternating ring which encloses part of the gamma chain. F(1) is attached to F(0) by a central stalk formed by the gamma and epsilon chains, while a peripheral stalk is formed by the delta and b chains.</text>
</comment>
<comment type="subcellular location">
    <subcellularLocation>
        <location evidence="1">Cell inner membrane</location>
        <topology evidence="1">Multi-pass membrane protein</topology>
    </subcellularLocation>
</comment>
<comment type="similarity">
    <text evidence="1">Belongs to the ATPase C chain family.</text>
</comment>
<gene>
    <name evidence="1" type="primary">atpE</name>
    <name type="ordered locus">PMI3059</name>
</gene>
<dbReference type="EMBL" id="AM942759">
    <property type="protein sequence ID" value="CAR46012.1"/>
    <property type="molecule type" value="Genomic_DNA"/>
</dbReference>
<dbReference type="RefSeq" id="WP_004246596.1">
    <property type="nucleotide sequence ID" value="NC_010554.1"/>
</dbReference>
<dbReference type="SMR" id="B4F0E2"/>
<dbReference type="EnsemblBacteria" id="CAR46012">
    <property type="protein sequence ID" value="CAR46012"/>
    <property type="gene ID" value="PMI3059"/>
</dbReference>
<dbReference type="GeneID" id="93392580"/>
<dbReference type="KEGG" id="pmr:PMI3059"/>
<dbReference type="eggNOG" id="ENOG5032S3K">
    <property type="taxonomic scope" value="Bacteria"/>
</dbReference>
<dbReference type="HOGENOM" id="CLU_148047_1_0_6"/>
<dbReference type="Proteomes" id="UP000008319">
    <property type="component" value="Chromosome"/>
</dbReference>
<dbReference type="GO" id="GO:0005886">
    <property type="term" value="C:plasma membrane"/>
    <property type="evidence" value="ECO:0007669"/>
    <property type="project" value="UniProtKB-SubCell"/>
</dbReference>
<dbReference type="GO" id="GO:0045259">
    <property type="term" value="C:proton-transporting ATP synthase complex"/>
    <property type="evidence" value="ECO:0007669"/>
    <property type="project" value="UniProtKB-KW"/>
</dbReference>
<dbReference type="GO" id="GO:0033177">
    <property type="term" value="C:proton-transporting two-sector ATPase complex, proton-transporting domain"/>
    <property type="evidence" value="ECO:0007669"/>
    <property type="project" value="InterPro"/>
</dbReference>
<dbReference type="GO" id="GO:0008289">
    <property type="term" value="F:lipid binding"/>
    <property type="evidence" value="ECO:0007669"/>
    <property type="project" value="UniProtKB-KW"/>
</dbReference>
<dbReference type="GO" id="GO:0046933">
    <property type="term" value="F:proton-transporting ATP synthase activity, rotational mechanism"/>
    <property type="evidence" value="ECO:0007669"/>
    <property type="project" value="UniProtKB-UniRule"/>
</dbReference>
<dbReference type="CDD" id="cd18185">
    <property type="entry name" value="ATP-synt_Fo_c_ATPE"/>
    <property type="match status" value="1"/>
</dbReference>
<dbReference type="FunFam" id="1.20.20.10:FF:000002">
    <property type="entry name" value="ATP synthase subunit c"/>
    <property type="match status" value="1"/>
</dbReference>
<dbReference type="Gene3D" id="1.20.20.10">
    <property type="entry name" value="F1F0 ATP synthase subunit C"/>
    <property type="match status" value="1"/>
</dbReference>
<dbReference type="HAMAP" id="MF_01396">
    <property type="entry name" value="ATP_synth_c_bact"/>
    <property type="match status" value="1"/>
</dbReference>
<dbReference type="InterPro" id="IPR005953">
    <property type="entry name" value="ATP_synth_csu_bac/chlpt"/>
</dbReference>
<dbReference type="InterPro" id="IPR000454">
    <property type="entry name" value="ATP_synth_F0_csu"/>
</dbReference>
<dbReference type="InterPro" id="IPR020537">
    <property type="entry name" value="ATP_synth_F0_csu_DDCD_BS"/>
</dbReference>
<dbReference type="InterPro" id="IPR038662">
    <property type="entry name" value="ATP_synth_F0_csu_sf"/>
</dbReference>
<dbReference type="InterPro" id="IPR002379">
    <property type="entry name" value="ATPase_proteolipid_c-like_dom"/>
</dbReference>
<dbReference type="InterPro" id="IPR035921">
    <property type="entry name" value="F/V-ATP_Csub_sf"/>
</dbReference>
<dbReference type="NCBIfam" id="TIGR01260">
    <property type="entry name" value="ATP_synt_c"/>
    <property type="match status" value="1"/>
</dbReference>
<dbReference type="NCBIfam" id="NF005363">
    <property type="entry name" value="PRK06876.1"/>
    <property type="match status" value="1"/>
</dbReference>
<dbReference type="Pfam" id="PF00137">
    <property type="entry name" value="ATP-synt_C"/>
    <property type="match status" value="1"/>
</dbReference>
<dbReference type="PRINTS" id="PR00124">
    <property type="entry name" value="ATPASEC"/>
</dbReference>
<dbReference type="SUPFAM" id="SSF81333">
    <property type="entry name" value="F1F0 ATP synthase subunit C"/>
    <property type="match status" value="1"/>
</dbReference>
<dbReference type="PROSITE" id="PS00605">
    <property type="entry name" value="ATPASE_C"/>
    <property type="match status" value="1"/>
</dbReference>
<organism>
    <name type="scientific">Proteus mirabilis (strain HI4320)</name>
    <dbReference type="NCBI Taxonomy" id="529507"/>
    <lineage>
        <taxon>Bacteria</taxon>
        <taxon>Pseudomonadati</taxon>
        <taxon>Pseudomonadota</taxon>
        <taxon>Gammaproteobacteria</taxon>
        <taxon>Enterobacterales</taxon>
        <taxon>Morganellaceae</taxon>
        <taxon>Proteus</taxon>
    </lineage>
</organism>
<name>ATPL_PROMH</name>
<keyword id="KW-0066">ATP synthesis</keyword>
<keyword id="KW-0997">Cell inner membrane</keyword>
<keyword id="KW-1003">Cell membrane</keyword>
<keyword id="KW-0138">CF(0)</keyword>
<keyword id="KW-0375">Hydrogen ion transport</keyword>
<keyword id="KW-0406">Ion transport</keyword>
<keyword id="KW-0446">Lipid-binding</keyword>
<keyword id="KW-0472">Membrane</keyword>
<keyword id="KW-1185">Reference proteome</keyword>
<keyword id="KW-0812">Transmembrane</keyword>
<keyword id="KW-1133">Transmembrane helix</keyword>
<keyword id="KW-0813">Transport</keyword>